<dbReference type="EC" id="4.2.1.-" evidence="9"/>
<dbReference type="EMBL" id="AB872924">
    <property type="protein sequence ID" value="BAO10617.1"/>
    <property type="molecule type" value="Genomic_DNA"/>
</dbReference>
<dbReference type="SMR" id="V5XZU2"/>
<dbReference type="GO" id="GO:0016829">
    <property type="term" value="F:lyase activity"/>
    <property type="evidence" value="ECO:0007669"/>
    <property type="project" value="UniProtKB-KW"/>
</dbReference>
<dbReference type="CDD" id="cd06558">
    <property type="entry name" value="crotonase-like"/>
    <property type="match status" value="1"/>
</dbReference>
<dbReference type="Gene3D" id="3.90.226.10">
    <property type="entry name" value="2-enoyl-CoA Hydratase, Chain A, domain 1"/>
    <property type="match status" value="1"/>
</dbReference>
<dbReference type="InterPro" id="IPR029045">
    <property type="entry name" value="ClpP/crotonase-like_dom_sf"/>
</dbReference>
<dbReference type="InterPro" id="IPR001753">
    <property type="entry name" value="Enoyl-CoA_hydra/iso"/>
</dbReference>
<dbReference type="InterPro" id="IPR051683">
    <property type="entry name" value="Enoyl-CoA_Hydratase/Isomerase"/>
</dbReference>
<dbReference type="PANTHER" id="PTHR42964">
    <property type="entry name" value="ENOYL-COA HYDRATASE"/>
    <property type="match status" value="1"/>
</dbReference>
<dbReference type="PANTHER" id="PTHR42964:SF1">
    <property type="entry name" value="POLYKETIDE BIOSYNTHESIS ENOYL-COA HYDRATASE PKSH-RELATED"/>
    <property type="match status" value="1"/>
</dbReference>
<dbReference type="Pfam" id="PF00378">
    <property type="entry name" value="ECH_1"/>
    <property type="match status" value="1"/>
</dbReference>
<dbReference type="SUPFAM" id="SSF52096">
    <property type="entry name" value="ClpP/crotonase"/>
    <property type="match status" value="1"/>
</dbReference>
<comment type="function">
    <text evidence="2 3 4 5 6">Enoyl-CoA hydratase; part of the gene clusters that mediate the biosynthesis of the host-selective toxins (HSTs) AK-toxins responsible for Japanese pear black spot disease by the Japanese pear pathotype (PubMed:24611558). AK-toxins are esters of 9,10-epoxy 8-hydroxy 9-methyldecatrienoic acid (EDA) (PubMed:22846083). On cellular level, AK-toxins affect plasma membrane of susceptible cells and cause a sudden increase in loss of K(+) after a few minutes of toxin treatment (PubMed:22846083). The acyl-CoA ligase AKT1, the hydrolase AKT2 and enoyl-CoA hydratase AKT3 are all involved in the biosynthesis of the AK-, AF- and ACT-toxin common 9,10-epoxy-8-hydroxy-9-methyl-decatrienoic acid (EDA) structural moiety (PubMed:10432635, PubMed:10975654, PubMed:22846083). Part of the EDA biosynthesis occurs in the peroxisome since these 3 enzymes are localized in peroxisomes (PubMed:20348386). The exact roles of the 3 enzymes, as well as of additional AK-toxin clusters enzymes, including AKT4, AKT6 and AKTS1, have still to be elucidated (PubMed:10432635, PubMed:10975654, PubMed:22846083). The Cytochrome P450 monooxygenase AKT7 on the other side functions to limit production of EDA and AK-toxin, probably via the catalysis of a side reaction of EDA or its precursor (PubMed:24611558).</text>
</comment>
<comment type="pathway">
    <text evidence="9">Mycotoxin biosynthesis.</text>
</comment>
<comment type="miscellaneous">
    <text evidence="3">Gene clusters encoding host-selective toxins (HSTs) are localized on conditionally dispensable chromosomes (CDCs), also called supernumerary chromosomes, where they are present in multiple copies (PubMed:10975654). The CDCs are not essential for saprophytic growth but controls host-selective pathogenicity (PubMed:10975654).</text>
</comment>
<comment type="similarity">
    <text evidence="8">Belongs to the enoyl-CoA hydratase/isomerase family.</text>
</comment>
<keyword id="KW-0456">Lyase</keyword>
<keyword id="KW-0843">Virulence</keyword>
<evidence type="ECO:0000256" key="1">
    <source>
        <dbReference type="SAM" id="MobiDB-lite"/>
    </source>
</evidence>
<evidence type="ECO:0000269" key="2">
    <source>
    </source>
</evidence>
<evidence type="ECO:0000269" key="3">
    <source>
    </source>
</evidence>
<evidence type="ECO:0000269" key="4">
    <source>
    </source>
</evidence>
<evidence type="ECO:0000269" key="5">
    <source>
    </source>
</evidence>
<evidence type="ECO:0000303" key="6">
    <source>
    </source>
</evidence>
<evidence type="ECO:0000303" key="7">
    <source>
    </source>
</evidence>
<evidence type="ECO:0000305" key="8"/>
<evidence type="ECO:0000305" key="9">
    <source>
    </source>
</evidence>
<reference key="1">
    <citation type="journal article" date="2014" name="New Phytol.">
        <title>Complex regulation of secondary metabolism controlling pathogenicity in the phytopathogenic fungus Alternaria alternata.</title>
        <authorList>
            <person name="Takaoka S."/>
            <person name="Kurata M."/>
            <person name="Harimoto Y."/>
            <person name="Hatta R."/>
            <person name="Yamamoto M."/>
            <person name="Akimitsu K."/>
            <person name="Tsuge T."/>
        </authorList>
    </citation>
    <scope>NUCLEOTIDE SEQUENCE [GENOMIC DNA]</scope>
    <scope>FUNCTION</scope>
    <scope>PATHWAY</scope>
    <source>
        <strain>15A</strain>
    </source>
</reference>
<reference key="2">
    <citation type="journal article" date="1999" name="Mol. Plant Microbe Interact.">
        <title>Insertional mutagenesis and cloning of the genes required for biosynthesis of the host-specific AK-toxin in the Japanese pear pathotype of Alternaria alternata.</title>
        <authorList>
            <person name="Tanaka A."/>
            <person name="Shiotani H."/>
            <person name="Yamamoto M."/>
            <person name="Tsuge T."/>
        </authorList>
    </citation>
    <scope>FUNCTION</scope>
    <source>
        <strain>15A</strain>
    </source>
</reference>
<reference key="3">
    <citation type="journal article" date="2000" name="Mol. Plant Microbe Interact.">
        <title>Structural and functional complexity of the genomic region controlling AK-toxin biosynthesis and pathogenicity in the Japanese pear pathotype of Alternaria alternata.</title>
        <authorList>
            <person name="Tanaka A."/>
            <person name="Tsuge T."/>
        </authorList>
    </citation>
    <scope>FUNCTION</scope>
</reference>
<reference key="4">
    <citation type="journal article" date="2010" name="Eukaryot. Cell">
        <title>Contribution of peroxisomes to secondary metabolism and pathogenicity in the fungal plant pathogen Alternaria alternata.</title>
        <authorList>
            <person name="Imazaki A."/>
            <person name="Tanaka A."/>
            <person name="Harimoto Y."/>
            <person name="Yamamoto M."/>
            <person name="Akimitsu K."/>
            <person name="Park P."/>
            <person name="Tsuge T."/>
        </authorList>
    </citation>
    <scope>FUNCTION</scope>
</reference>
<reference key="5">
    <citation type="journal article" date="2013" name="FEMS Microbiol. Rev.">
        <title>Host-selective toxins produced by the plant pathogenic fungus Alternaria alternata.</title>
        <authorList>
            <person name="Tsuge T."/>
            <person name="Harimoto Y."/>
            <person name="Akimitsu K."/>
            <person name="Ohtani K."/>
            <person name="Kodama M."/>
            <person name="Akagi Y."/>
            <person name="Egusa M."/>
            <person name="Yamamoto M."/>
            <person name="Otani H."/>
        </authorList>
    </citation>
    <scope>REVIEW ON HOST-SELECTIVE TOXINS</scope>
</reference>
<sequence>MTFSTTKSVAMSPDDDAPSFDINSSRRLMSHSEVESRGNGYEVLQQAGTVRILLSRPERGNALSLSLAKDLTQLFQTFSSQHSVHRIVLTGKGKYFCSGMDLGEELYEDATERCLALQDLFGAIDACPKTTVAAINGPAFGGGVGLAFVCDIRVAVSTSFFCLSEVKLGLCPATVSRFIIREWGVSLARMAMLTARKIHPQALQEMGVLHAVALDEEALKVVTENLLDDLGFAAPQASAWCKALTRKTRNGNSDHDQFARQISETMVAPGSESEYGVAQFRRGRKNIRWEQAECLHTR</sequence>
<feature type="chain" id="PRO_0000444835" description="Enoyl-CoA hydratase AKT6-1">
    <location>
        <begin position="1"/>
        <end position="298"/>
    </location>
</feature>
<feature type="region of interest" description="Disordered" evidence="1">
    <location>
        <begin position="1"/>
        <end position="23"/>
    </location>
</feature>
<organism>
    <name type="scientific">Alternaria alternata</name>
    <name type="common">Alternaria rot fungus</name>
    <name type="synonym">Torula alternata</name>
    <dbReference type="NCBI Taxonomy" id="5599"/>
    <lineage>
        <taxon>Eukaryota</taxon>
        <taxon>Fungi</taxon>
        <taxon>Dikarya</taxon>
        <taxon>Ascomycota</taxon>
        <taxon>Pezizomycotina</taxon>
        <taxon>Dothideomycetes</taxon>
        <taxon>Pleosporomycetidae</taxon>
        <taxon>Pleosporales</taxon>
        <taxon>Pleosporineae</taxon>
        <taxon>Pleosporaceae</taxon>
        <taxon>Alternaria</taxon>
        <taxon>Alternaria sect. Alternaria</taxon>
        <taxon>Alternaria alternata complex</taxon>
    </lineage>
</organism>
<accession>V5XZU2</accession>
<gene>
    <name evidence="7" type="primary">AKT6-1</name>
</gene>
<protein>
    <recommendedName>
        <fullName evidence="7">Enoyl-CoA hydratase AKT6-1</fullName>
        <ecNumber evidence="9">4.2.1.-</ecNumber>
    </recommendedName>
    <alternativeName>
        <fullName evidence="7">AK-toxin biosynthesis protein 6-1</fullName>
    </alternativeName>
</protein>
<proteinExistence type="inferred from homology"/>
<name>AKT61_ALTAL</name>